<sequence length="104" mass="11936">MAIIPDKQDSTVLERKQQKLKPPSMYKVVLLNDDFTPMEFVVMVVQEYFKKDRETATQIMLKVHREGRGVCGVYTRDIASTKVEQVVTHARQAGHPLQCVMEEA</sequence>
<reference key="1">
    <citation type="submission" date="2008-04" db="EMBL/GenBank/DDBJ databases">
        <title>Complete sequence of chromosome 1 of Burkholderia ambifaria MC40-6.</title>
        <authorList>
            <person name="Copeland A."/>
            <person name="Lucas S."/>
            <person name="Lapidus A."/>
            <person name="Glavina del Rio T."/>
            <person name="Dalin E."/>
            <person name="Tice H."/>
            <person name="Pitluck S."/>
            <person name="Chain P."/>
            <person name="Malfatti S."/>
            <person name="Shin M."/>
            <person name="Vergez L."/>
            <person name="Lang D."/>
            <person name="Schmutz J."/>
            <person name="Larimer F."/>
            <person name="Land M."/>
            <person name="Hauser L."/>
            <person name="Kyrpides N."/>
            <person name="Lykidis A."/>
            <person name="Ramette A."/>
            <person name="Konstantinidis K."/>
            <person name="Tiedje J."/>
            <person name="Richardson P."/>
        </authorList>
    </citation>
    <scope>NUCLEOTIDE SEQUENCE [LARGE SCALE GENOMIC DNA]</scope>
    <source>
        <strain>MC40-6</strain>
    </source>
</reference>
<evidence type="ECO:0000255" key="1">
    <source>
        <dbReference type="HAMAP-Rule" id="MF_00302"/>
    </source>
</evidence>
<dbReference type="EMBL" id="CP001025">
    <property type="protein sequence ID" value="ACB64915.1"/>
    <property type="molecule type" value="Genomic_DNA"/>
</dbReference>
<dbReference type="RefSeq" id="WP_006398529.1">
    <property type="nucleotide sequence ID" value="NC_010551.1"/>
</dbReference>
<dbReference type="SMR" id="B1YVB1"/>
<dbReference type="GeneID" id="98107640"/>
<dbReference type="KEGG" id="bac:BamMC406_2437"/>
<dbReference type="HOGENOM" id="CLU_134358_0_0_4"/>
<dbReference type="OrthoDB" id="9796121at2"/>
<dbReference type="Proteomes" id="UP000001680">
    <property type="component" value="Chromosome 1"/>
</dbReference>
<dbReference type="GO" id="GO:0030163">
    <property type="term" value="P:protein catabolic process"/>
    <property type="evidence" value="ECO:0007669"/>
    <property type="project" value="InterPro"/>
</dbReference>
<dbReference type="GO" id="GO:0006508">
    <property type="term" value="P:proteolysis"/>
    <property type="evidence" value="ECO:0007669"/>
    <property type="project" value="UniProtKB-UniRule"/>
</dbReference>
<dbReference type="FunFam" id="3.30.1390.10:FF:000002">
    <property type="entry name" value="ATP-dependent Clp protease adapter protein ClpS"/>
    <property type="match status" value="1"/>
</dbReference>
<dbReference type="Gene3D" id="3.30.1390.10">
    <property type="match status" value="1"/>
</dbReference>
<dbReference type="HAMAP" id="MF_00302">
    <property type="entry name" value="ClpS"/>
    <property type="match status" value="1"/>
</dbReference>
<dbReference type="InterPro" id="IPR022935">
    <property type="entry name" value="ClpS"/>
</dbReference>
<dbReference type="InterPro" id="IPR003769">
    <property type="entry name" value="ClpS_core"/>
</dbReference>
<dbReference type="InterPro" id="IPR014719">
    <property type="entry name" value="Ribosomal_bL12_C/ClpS-like"/>
</dbReference>
<dbReference type="NCBIfam" id="NF000672">
    <property type="entry name" value="PRK00033.1-5"/>
    <property type="match status" value="1"/>
</dbReference>
<dbReference type="PANTHER" id="PTHR33473:SF19">
    <property type="entry name" value="ATP-DEPENDENT CLP PROTEASE ADAPTER PROTEIN CLPS"/>
    <property type="match status" value="1"/>
</dbReference>
<dbReference type="PANTHER" id="PTHR33473">
    <property type="entry name" value="ATP-DEPENDENT CLP PROTEASE ADAPTER PROTEIN CLPS1, CHLOROPLASTIC"/>
    <property type="match status" value="1"/>
</dbReference>
<dbReference type="Pfam" id="PF02617">
    <property type="entry name" value="ClpS"/>
    <property type="match status" value="1"/>
</dbReference>
<dbReference type="SUPFAM" id="SSF54736">
    <property type="entry name" value="ClpS-like"/>
    <property type="match status" value="1"/>
</dbReference>
<organism>
    <name type="scientific">Burkholderia ambifaria (strain MC40-6)</name>
    <dbReference type="NCBI Taxonomy" id="398577"/>
    <lineage>
        <taxon>Bacteria</taxon>
        <taxon>Pseudomonadati</taxon>
        <taxon>Pseudomonadota</taxon>
        <taxon>Betaproteobacteria</taxon>
        <taxon>Burkholderiales</taxon>
        <taxon>Burkholderiaceae</taxon>
        <taxon>Burkholderia</taxon>
        <taxon>Burkholderia cepacia complex</taxon>
    </lineage>
</organism>
<comment type="function">
    <text evidence="1">Involved in the modulation of the specificity of the ClpAP-mediated ATP-dependent protein degradation.</text>
</comment>
<comment type="subunit">
    <text evidence="1">Binds to the N-terminal domain of the chaperone ClpA.</text>
</comment>
<comment type="similarity">
    <text evidence="1">Belongs to the ClpS family.</text>
</comment>
<protein>
    <recommendedName>
        <fullName evidence="1">ATP-dependent Clp protease adapter protein ClpS</fullName>
    </recommendedName>
</protein>
<accession>B1YVB1</accession>
<name>CLPS_BURA4</name>
<proteinExistence type="inferred from homology"/>
<gene>
    <name evidence="1" type="primary">clpS</name>
    <name type="ordered locus">BamMC406_2437</name>
</gene>
<feature type="chain" id="PRO_1000115447" description="ATP-dependent Clp protease adapter protein ClpS">
    <location>
        <begin position="1"/>
        <end position="104"/>
    </location>
</feature>